<proteinExistence type="inferred from homology"/>
<comment type="function">
    <text evidence="1">Single strand-specific metallo-endoribonuclease involved in late-stage 70S ribosome quality control and in maturation of the 3' terminus of the 16S rRNA.</text>
</comment>
<comment type="cofactor">
    <cofactor evidence="1">
        <name>Zn(2+)</name>
        <dbReference type="ChEBI" id="CHEBI:29105"/>
    </cofactor>
    <text evidence="1">Binds 1 zinc ion.</text>
</comment>
<comment type="subcellular location">
    <subcellularLocation>
        <location evidence="1">Cytoplasm</location>
    </subcellularLocation>
</comment>
<comment type="similarity">
    <text evidence="1">Belongs to the endoribonuclease YbeY family.</text>
</comment>
<protein>
    <recommendedName>
        <fullName evidence="1">Endoribonuclease YbeY</fullName>
        <ecNumber evidence="1">3.1.-.-</ecNumber>
    </recommendedName>
</protein>
<reference key="1">
    <citation type="submission" date="2009-01" db="EMBL/GenBank/DDBJ databases">
        <title>Complete sequence of Diaphorobacter sp. TPSY.</title>
        <authorList>
            <consortium name="US DOE Joint Genome Institute"/>
            <person name="Lucas S."/>
            <person name="Copeland A."/>
            <person name="Lapidus A."/>
            <person name="Glavina del Rio T."/>
            <person name="Tice H."/>
            <person name="Bruce D."/>
            <person name="Goodwin L."/>
            <person name="Pitluck S."/>
            <person name="Chertkov O."/>
            <person name="Brettin T."/>
            <person name="Detter J.C."/>
            <person name="Han C."/>
            <person name="Larimer F."/>
            <person name="Land M."/>
            <person name="Hauser L."/>
            <person name="Kyrpides N."/>
            <person name="Mikhailova N."/>
            <person name="Coates J.D."/>
        </authorList>
    </citation>
    <scope>NUCLEOTIDE SEQUENCE [LARGE SCALE GENOMIC DNA]</scope>
    <source>
        <strain>TPSY</strain>
    </source>
</reference>
<feature type="chain" id="PRO_1000199969" description="Endoribonuclease YbeY">
    <location>
        <begin position="1"/>
        <end position="152"/>
    </location>
</feature>
<feature type="binding site" evidence="1">
    <location>
        <position position="113"/>
    </location>
    <ligand>
        <name>Zn(2+)</name>
        <dbReference type="ChEBI" id="CHEBI:29105"/>
        <note>catalytic</note>
    </ligand>
</feature>
<feature type="binding site" evidence="1">
    <location>
        <position position="117"/>
    </location>
    <ligand>
        <name>Zn(2+)</name>
        <dbReference type="ChEBI" id="CHEBI:29105"/>
        <note>catalytic</note>
    </ligand>
</feature>
<feature type="binding site" evidence="1">
    <location>
        <position position="123"/>
    </location>
    <ligand>
        <name>Zn(2+)</name>
        <dbReference type="ChEBI" id="CHEBI:29105"/>
        <note>catalytic</note>
    </ligand>
</feature>
<accession>B9MCH3</accession>
<name>YBEY_ACIET</name>
<dbReference type="EC" id="3.1.-.-" evidence="1"/>
<dbReference type="EMBL" id="CP001392">
    <property type="protein sequence ID" value="ACM31973.1"/>
    <property type="molecule type" value="Genomic_DNA"/>
</dbReference>
<dbReference type="RefSeq" id="WP_012655525.1">
    <property type="nucleotide sequence ID" value="NC_011992.1"/>
</dbReference>
<dbReference type="SMR" id="B9MCH3"/>
<dbReference type="KEGG" id="dia:Dtpsy_0491"/>
<dbReference type="eggNOG" id="COG0319">
    <property type="taxonomic scope" value="Bacteria"/>
</dbReference>
<dbReference type="HOGENOM" id="CLU_106710_0_1_4"/>
<dbReference type="Proteomes" id="UP000000450">
    <property type="component" value="Chromosome"/>
</dbReference>
<dbReference type="GO" id="GO:0005737">
    <property type="term" value="C:cytoplasm"/>
    <property type="evidence" value="ECO:0007669"/>
    <property type="project" value="UniProtKB-SubCell"/>
</dbReference>
<dbReference type="GO" id="GO:0004222">
    <property type="term" value="F:metalloendopeptidase activity"/>
    <property type="evidence" value="ECO:0007669"/>
    <property type="project" value="InterPro"/>
</dbReference>
<dbReference type="GO" id="GO:0004521">
    <property type="term" value="F:RNA endonuclease activity"/>
    <property type="evidence" value="ECO:0007669"/>
    <property type="project" value="UniProtKB-UniRule"/>
</dbReference>
<dbReference type="GO" id="GO:0008270">
    <property type="term" value="F:zinc ion binding"/>
    <property type="evidence" value="ECO:0007669"/>
    <property type="project" value="UniProtKB-UniRule"/>
</dbReference>
<dbReference type="GO" id="GO:0006364">
    <property type="term" value="P:rRNA processing"/>
    <property type="evidence" value="ECO:0007669"/>
    <property type="project" value="UniProtKB-UniRule"/>
</dbReference>
<dbReference type="Gene3D" id="3.40.390.30">
    <property type="entry name" value="Metalloproteases ('zincins'), catalytic domain"/>
    <property type="match status" value="1"/>
</dbReference>
<dbReference type="HAMAP" id="MF_00009">
    <property type="entry name" value="Endoribonucl_YbeY"/>
    <property type="match status" value="1"/>
</dbReference>
<dbReference type="InterPro" id="IPR023091">
    <property type="entry name" value="MetalPrtase_cat_dom_sf_prd"/>
</dbReference>
<dbReference type="InterPro" id="IPR002036">
    <property type="entry name" value="YbeY"/>
</dbReference>
<dbReference type="InterPro" id="IPR020549">
    <property type="entry name" value="YbeY_CS"/>
</dbReference>
<dbReference type="NCBIfam" id="TIGR00043">
    <property type="entry name" value="rRNA maturation RNase YbeY"/>
    <property type="match status" value="1"/>
</dbReference>
<dbReference type="PANTHER" id="PTHR46986">
    <property type="entry name" value="ENDORIBONUCLEASE YBEY, CHLOROPLASTIC"/>
    <property type="match status" value="1"/>
</dbReference>
<dbReference type="PANTHER" id="PTHR46986:SF1">
    <property type="entry name" value="ENDORIBONUCLEASE YBEY, CHLOROPLASTIC"/>
    <property type="match status" value="1"/>
</dbReference>
<dbReference type="Pfam" id="PF02130">
    <property type="entry name" value="YbeY"/>
    <property type="match status" value="1"/>
</dbReference>
<dbReference type="SUPFAM" id="SSF55486">
    <property type="entry name" value="Metalloproteases ('zincins'), catalytic domain"/>
    <property type="match status" value="1"/>
</dbReference>
<dbReference type="PROSITE" id="PS01306">
    <property type="entry name" value="UPF0054"/>
    <property type="match status" value="1"/>
</dbReference>
<sequence>MALNQLSLSLQFARDAEATAHRATLPRHAVARWIRHALAVDAEITVRIVGAEEGQRLNREFRHKDYATNVLTFDYQQEPVAVADLVLCAPVVEREAREQNKTLEEHYAHLLVHGTLHAQGWDHETSEQDAQEMEVYETAILQELGFADPYAA</sequence>
<gene>
    <name evidence="1" type="primary">ybeY</name>
    <name type="ordered locus">Dtpsy_0491</name>
</gene>
<evidence type="ECO:0000255" key="1">
    <source>
        <dbReference type="HAMAP-Rule" id="MF_00009"/>
    </source>
</evidence>
<organism>
    <name type="scientific">Acidovorax ebreus (strain TPSY)</name>
    <name type="common">Diaphorobacter sp. (strain TPSY)</name>
    <dbReference type="NCBI Taxonomy" id="535289"/>
    <lineage>
        <taxon>Bacteria</taxon>
        <taxon>Pseudomonadati</taxon>
        <taxon>Pseudomonadota</taxon>
        <taxon>Betaproteobacteria</taxon>
        <taxon>Burkholderiales</taxon>
        <taxon>Comamonadaceae</taxon>
        <taxon>Diaphorobacter</taxon>
    </lineage>
</organism>
<keyword id="KW-0963">Cytoplasm</keyword>
<keyword id="KW-0255">Endonuclease</keyword>
<keyword id="KW-0378">Hydrolase</keyword>
<keyword id="KW-0479">Metal-binding</keyword>
<keyword id="KW-0540">Nuclease</keyword>
<keyword id="KW-1185">Reference proteome</keyword>
<keyword id="KW-0690">Ribosome biogenesis</keyword>
<keyword id="KW-0698">rRNA processing</keyword>
<keyword id="KW-0862">Zinc</keyword>